<reference key="1">
    <citation type="journal article" date="2001" name="Proc. Natl. Acad. Sci. U.S.A.">
        <title>Pattern of mutation in the genome of influenza A virus on adaptation to increased virulence in the mouse lung: identification of functional themes.</title>
        <authorList>
            <person name="Brown E.G."/>
            <person name="Liu H."/>
            <person name="Kit L.C."/>
            <person name="Baird S."/>
            <person name="Nesrallah M."/>
        </authorList>
    </citation>
    <scope>NUCLEOTIDE SEQUENCE [GENOMIC RNA]</scope>
    <source>
        <strain>A/Hong Kong/1/1968</strain>
        <strain>Isolate MA12</strain>
        <strain>Isolate MA12A</strain>
        <strain>Isolate MA12B</strain>
        <strain>Isolate MA20</strain>
        <strain>Isolate MA20a</strain>
        <strain>Isolate MA20b</strain>
        <strain>Isolate MA20c</strain>
        <strain>Isolate MA20d</strain>
        <strain>Isolate MA20e</strain>
    </source>
</reference>
<gene>
    <name evidence="1" type="primary">M</name>
</gene>
<proteinExistence type="inferred from homology"/>
<sequence length="97" mass="11186">MSLLTEVETPIRNEWGCRCNDSSDPLVVAASIIGILHLILWILDRLFFKCIYRFFEHGLKRGPSTEGVPESMREEYRKEQQSAVDADDSHFVSIELE</sequence>
<organism>
    <name type="scientific">Influenza A virus (strain A/Hong Kong/1/1968 H3N2)</name>
    <dbReference type="NCBI Taxonomy" id="506350"/>
    <lineage>
        <taxon>Viruses</taxon>
        <taxon>Riboviria</taxon>
        <taxon>Orthornavirae</taxon>
        <taxon>Negarnaviricota</taxon>
        <taxon>Polyploviricotina</taxon>
        <taxon>Insthoviricetes</taxon>
        <taxon>Articulavirales</taxon>
        <taxon>Orthomyxoviridae</taxon>
        <taxon>Alphainfluenzavirus</taxon>
        <taxon>Alphainfluenzavirus influenzae</taxon>
        <taxon>Influenza A virus</taxon>
    </lineage>
</organism>
<name>M2_I68A4</name>
<evidence type="ECO:0000255" key="1">
    <source>
        <dbReference type="HAMAP-Rule" id="MF_04069"/>
    </source>
</evidence>
<evidence type="ECO:0000256" key="2">
    <source>
        <dbReference type="SAM" id="MobiDB-lite"/>
    </source>
</evidence>
<dbReference type="EMBL" id="AF348188">
    <property type="protein sequence ID" value="AAK51731.1"/>
    <property type="molecule type" value="Genomic_RNA"/>
</dbReference>
<dbReference type="EMBL" id="AF348189">
    <property type="protein sequence ID" value="AAK51733.1"/>
    <property type="molecule type" value="Genomic_RNA"/>
</dbReference>
<dbReference type="EMBL" id="AF348190">
    <property type="protein sequence ID" value="AAK51735.1"/>
    <property type="molecule type" value="Genomic_RNA"/>
</dbReference>
<dbReference type="EMBL" id="AF348191">
    <property type="protein sequence ID" value="AAK51737.1"/>
    <property type="molecule type" value="Genomic_RNA"/>
</dbReference>
<dbReference type="EMBL" id="AF348192">
    <property type="protein sequence ID" value="AAK51739.1"/>
    <property type="molecule type" value="Genomic_RNA"/>
</dbReference>
<dbReference type="EMBL" id="AF348193">
    <property type="protein sequence ID" value="AAK51741.1"/>
    <property type="molecule type" value="Genomic_RNA"/>
</dbReference>
<dbReference type="EMBL" id="AF348194">
    <property type="protein sequence ID" value="AAK51743.1"/>
    <property type="molecule type" value="Genomic_RNA"/>
</dbReference>
<dbReference type="EMBL" id="AF348195">
    <property type="protein sequence ID" value="AAK51745.1"/>
    <property type="molecule type" value="Genomic_RNA"/>
</dbReference>
<dbReference type="EMBL" id="AF348196">
    <property type="protein sequence ID" value="AAK51747.1"/>
    <property type="molecule type" value="Genomic_RNA"/>
</dbReference>
<dbReference type="EMBL" id="AF348197">
    <property type="protein sequence ID" value="AAK51749.1"/>
    <property type="molecule type" value="Genomic_RNA"/>
</dbReference>
<dbReference type="SMR" id="Q77IM6"/>
<dbReference type="IntAct" id="Q77IM6">
    <property type="interactions" value="1"/>
</dbReference>
<dbReference type="GlyCosmos" id="Q77IM6">
    <property type="glycosylation" value="1 site, No reported glycans"/>
</dbReference>
<dbReference type="Proteomes" id="UP000142359">
    <property type="component" value="Genome"/>
</dbReference>
<dbReference type="GO" id="GO:0020002">
    <property type="term" value="C:host cell plasma membrane"/>
    <property type="evidence" value="ECO:0007669"/>
    <property type="project" value="UniProtKB-SubCell"/>
</dbReference>
<dbReference type="GO" id="GO:0016020">
    <property type="term" value="C:membrane"/>
    <property type="evidence" value="ECO:0007669"/>
    <property type="project" value="UniProtKB-UniRule"/>
</dbReference>
<dbReference type="GO" id="GO:0055036">
    <property type="term" value="C:virion membrane"/>
    <property type="evidence" value="ECO:0007669"/>
    <property type="project" value="UniProtKB-SubCell"/>
</dbReference>
<dbReference type="GO" id="GO:0005216">
    <property type="term" value="F:monoatomic ion channel activity"/>
    <property type="evidence" value="ECO:0007669"/>
    <property type="project" value="UniProtKB-UniRule"/>
</dbReference>
<dbReference type="GO" id="GO:0015078">
    <property type="term" value="F:proton transmembrane transporter activity"/>
    <property type="evidence" value="ECO:0007669"/>
    <property type="project" value="UniProtKB-UniRule"/>
</dbReference>
<dbReference type="GO" id="GO:0051259">
    <property type="term" value="P:protein complex oligomerization"/>
    <property type="evidence" value="ECO:0007669"/>
    <property type="project" value="UniProtKB-UniRule"/>
</dbReference>
<dbReference type="GO" id="GO:0044694">
    <property type="term" value="P:symbiont genome entry into host cell via pore formation in plasma membrane"/>
    <property type="evidence" value="ECO:0007669"/>
    <property type="project" value="UniProtKB-UniRule"/>
</dbReference>
<dbReference type="GO" id="GO:0140321">
    <property type="term" value="P:symbiont-mediated suppression of host autophagy"/>
    <property type="evidence" value="ECO:0007669"/>
    <property type="project" value="UniProtKB-KW"/>
</dbReference>
<dbReference type="Gene3D" id="6.10.250.1640">
    <property type="match status" value="1"/>
</dbReference>
<dbReference type="HAMAP" id="MF_04069">
    <property type="entry name" value="INFV_M2"/>
    <property type="match status" value="1"/>
</dbReference>
<dbReference type="InterPro" id="IPR002089">
    <property type="entry name" value="Flu_M2"/>
</dbReference>
<dbReference type="Pfam" id="PF00599">
    <property type="entry name" value="Flu_M2"/>
    <property type="match status" value="1"/>
</dbReference>
<feature type="chain" id="PRO_0000326346" description="Matrix protein 2">
    <location>
        <begin position="1"/>
        <end position="97"/>
    </location>
</feature>
<feature type="topological domain" description="Virion surface" evidence="1">
    <location>
        <begin position="1"/>
        <end position="22"/>
    </location>
</feature>
<feature type="transmembrane region" description="Helical; Signal-anchor for type III membrane protein" evidence="1">
    <location>
        <begin position="23"/>
        <end position="43"/>
    </location>
</feature>
<feature type="topological domain" description="Intravirion" evidence="1">
    <location>
        <begin position="44"/>
        <end position="97"/>
    </location>
</feature>
<feature type="region of interest" description="Disordered" evidence="2">
    <location>
        <begin position="60"/>
        <end position="88"/>
    </location>
</feature>
<feature type="compositionally biased region" description="Basic and acidic residues" evidence="2">
    <location>
        <begin position="71"/>
        <end position="80"/>
    </location>
</feature>
<feature type="site" description="Essential for channel activity, possibly by being protonated during channel activation, and by forming the channel gate and the selective filter" evidence="1">
    <location>
        <position position="37"/>
    </location>
</feature>
<feature type="site" description="Seems to be involved in pH gating" evidence="1">
    <location>
        <position position="41"/>
    </location>
</feature>
<feature type="modified residue" description="Phosphoserine; by host" evidence="1">
    <location>
        <position position="64"/>
    </location>
</feature>
<feature type="modified residue" description="Phosphoserine; by host" evidence="1">
    <location>
        <position position="82"/>
    </location>
</feature>
<feature type="modified residue" description="Phosphoserine; by host" evidence="1">
    <location>
        <position position="93"/>
    </location>
</feature>
<feature type="lipid moiety-binding region" description="S-palmitoyl cysteine; by host" evidence="1">
    <location>
        <position position="50"/>
    </location>
</feature>
<feature type="glycosylation site" description="N-linked (GlcNAc...) asparagine; by host" evidence="1">
    <location>
        <position position="20"/>
    </location>
</feature>
<feature type="disulfide bond" description="Interchain (with C-17)" evidence="1">
    <location>
        <position position="17"/>
    </location>
</feature>
<feature type="disulfide bond" description="Interchain (with C-19)" evidence="1">
    <location>
        <position position="19"/>
    </location>
</feature>
<feature type="sequence variant" description="In strain: Isolate MA20b, Isolate MA20c and Isolate MA20e.">
    <original>D</original>
    <variation>N</variation>
    <location>
        <position position="44"/>
    </location>
</feature>
<feature type="sequence variant" description="In strain: Isolate MA20a.">
    <original>L</original>
    <variation>R</variation>
    <location>
        <position position="96"/>
    </location>
</feature>
<comment type="function">
    <text evidence="1">Forms a proton-selective ion channel that is necessary for the efficient release of the viral genome during virus entry. After attaching to the cell surface, the virion enters the cell by endocytosis. Acidification of the endosome triggers M2 ion channel activity. The influx of protons into virion interior is believed to disrupt interactions between the viral ribonucleoprotein (RNP), matrix protein 1 (M1), and lipid bilayers, thereby freeing the viral genome from interaction with viral proteins and enabling RNA segments to migrate to the host cell nucleus, where influenza virus RNA transcription and replication occur. Also plays a role in viral proteins secretory pathway. Elevates the intravesicular pH of normally acidic compartments, such as trans-Golgi network, preventing newly formed hemagglutinin from premature switching to the fusion-active conformation.</text>
</comment>
<comment type="activity regulation">
    <text>The M2 protein from most influenza A strains is inhibited by amantadine and rimantadine, resulting in viral uncoating incapacity. Emergence of amantadine-resistant variants is usually rapid.</text>
</comment>
<comment type="subunit">
    <text evidence="1">Homotetramer; composed of two disulfide-linked dimers held together by non-covalent interactions. May interact with matrix protein 1.</text>
</comment>
<comment type="subcellular location">
    <subcellularLocation>
        <location evidence="1">Virion membrane</location>
    </subcellularLocation>
    <subcellularLocation>
        <location evidence="1">Host apical cell membrane</location>
        <topology evidence="1">Single-pass type III membrane protein</topology>
    </subcellularLocation>
    <text evidence="1">Abundantly expressed at the apical plasma membrane in infected polarized epithelial cells, in close proximity to budding and assembled virions. Minor component of virions (only 16-20 molecules/virion).</text>
</comment>
<comment type="alternative products">
    <event type="alternative splicing"/>
    <isoform>
        <id>Q77IM6-1</id>
        <name>M2</name>
        <sequence type="displayed"/>
    </isoform>
    <isoform>
        <id>Q910N6-1</id>
        <name>M1</name>
        <sequence type="external"/>
    </isoform>
    <text>Only the first 9 residues are shared by the 2 isoforms.</text>
</comment>
<comment type="domain">
    <text evidence="1">Cytoplasmic tail plays an important role in virion assembly and morphogenesis.</text>
</comment>
<comment type="miscellaneous">
    <text evidence="1">When the channel is activated, one or more imidazole moieties of His-37 probably become bi-protonated.</text>
</comment>
<comment type="similarity">
    <text evidence="1">Belongs to the influenza viruses matrix protein M2 family.</text>
</comment>
<keyword id="KW-0025">Alternative splicing</keyword>
<keyword id="KW-1015">Disulfide bond</keyword>
<keyword id="KW-0325">Glycoprotein</keyword>
<keyword id="KW-1032">Host cell membrane</keyword>
<keyword id="KW-1043">Host membrane</keyword>
<keyword id="KW-0945">Host-virus interaction</keyword>
<keyword id="KW-0375">Hydrogen ion transport</keyword>
<keyword id="KW-1083">Inhibition of host autophagy by virus</keyword>
<keyword id="KW-0407">Ion channel</keyword>
<keyword id="KW-0406">Ion transport</keyword>
<keyword id="KW-0449">Lipoprotein</keyword>
<keyword id="KW-0472">Membrane</keyword>
<keyword id="KW-0564">Palmitate</keyword>
<keyword id="KW-0597">Phosphoprotein</keyword>
<keyword id="KW-0735">Signal-anchor</keyword>
<keyword id="KW-0812">Transmembrane</keyword>
<keyword id="KW-1133">Transmembrane helix</keyword>
<keyword id="KW-0813">Transport</keyword>
<keyword id="KW-1182">Viral ion channel</keyword>
<keyword id="KW-0946">Virion</keyword>
<protein>
    <recommendedName>
        <fullName evidence="1">Matrix protein 2</fullName>
    </recommendedName>
    <alternativeName>
        <fullName evidence="1">Proton channel protein M2</fullName>
    </alternativeName>
</protein>
<accession>Q77IM6</accession>
<accession>Q910G8</accession>
<accession>Q91MA1</accession>
<organismHost>
    <name type="scientific">Aves</name>
    <dbReference type="NCBI Taxonomy" id="8782"/>
</organismHost>
<organismHost>
    <name type="scientific">Cetacea</name>
    <name type="common">whales</name>
    <dbReference type="NCBI Taxonomy" id="9721"/>
</organismHost>
<organismHost>
    <name type="scientific">Homo sapiens</name>
    <name type="common">Human</name>
    <dbReference type="NCBI Taxonomy" id="9606"/>
</organismHost>
<organismHost>
    <name type="scientific">Phocidae</name>
    <name type="common">true seals</name>
    <dbReference type="NCBI Taxonomy" id="9709"/>
</organismHost>
<organismHost>
    <name type="scientific">Sus scrofa</name>
    <name type="common">Pig</name>
    <dbReference type="NCBI Taxonomy" id="9823"/>
</organismHost>